<name>LEUC_YERPB</name>
<organism>
    <name type="scientific">Yersinia pseudotuberculosis serotype IB (strain PB1/+)</name>
    <dbReference type="NCBI Taxonomy" id="502801"/>
    <lineage>
        <taxon>Bacteria</taxon>
        <taxon>Pseudomonadati</taxon>
        <taxon>Pseudomonadota</taxon>
        <taxon>Gammaproteobacteria</taxon>
        <taxon>Enterobacterales</taxon>
        <taxon>Yersiniaceae</taxon>
        <taxon>Yersinia</taxon>
    </lineage>
</organism>
<feature type="chain" id="PRO_1000135723" description="3-isopropylmalate dehydratase large subunit">
    <location>
        <begin position="1"/>
        <end position="476"/>
    </location>
</feature>
<feature type="binding site" evidence="1">
    <location>
        <position position="353"/>
    </location>
    <ligand>
        <name>[4Fe-4S] cluster</name>
        <dbReference type="ChEBI" id="CHEBI:49883"/>
    </ligand>
</feature>
<feature type="binding site" evidence="1">
    <location>
        <position position="413"/>
    </location>
    <ligand>
        <name>[4Fe-4S] cluster</name>
        <dbReference type="ChEBI" id="CHEBI:49883"/>
    </ligand>
</feature>
<feature type="binding site" evidence="1">
    <location>
        <position position="416"/>
    </location>
    <ligand>
        <name>[4Fe-4S] cluster</name>
        <dbReference type="ChEBI" id="CHEBI:49883"/>
    </ligand>
</feature>
<dbReference type="EC" id="4.2.1.33" evidence="1"/>
<dbReference type="EMBL" id="CP001048">
    <property type="protein sequence ID" value="ACC87680.1"/>
    <property type="molecule type" value="Genomic_DNA"/>
</dbReference>
<dbReference type="RefSeq" id="WP_011191727.1">
    <property type="nucleotide sequence ID" value="NZ_CP009780.1"/>
</dbReference>
<dbReference type="SMR" id="B2K4C7"/>
<dbReference type="KEGG" id="ypb:YPTS_0696"/>
<dbReference type="PATRIC" id="fig|502801.10.peg.25"/>
<dbReference type="UniPathway" id="UPA00048">
    <property type="reaction ID" value="UER00071"/>
</dbReference>
<dbReference type="GO" id="GO:0003861">
    <property type="term" value="F:3-isopropylmalate dehydratase activity"/>
    <property type="evidence" value="ECO:0007669"/>
    <property type="project" value="UniProtKB-UniRule"/>
</dbReference>
<dbReference type="GO" id="GO:0051539">
    <property type="term" value="F:4 iron, 4 sulfur cluster binding"/>
    <property type="evidence" value="ECO:0007669"/>
    <property type="project" value="UniProtKB-KW"/>
</dbReference>
<dbReference type="GO" id="GO:0046872">
    <property type="term" value="F:metal ion binding"/>
    <property type="evidence" value="ECO:0007669"/>
    <property type="project" value="UniProtKB-KW"/>
</dbReference>
<dbReference type="GO" id="GO:0009098">
    <property type="term" value="P:L-leucine biosynthetic process"/>
    <property type="evidence" value="ECO:0007669"/>
    <property type="project" value="UniProtKB-UniRule"/>
</dbReference>
<dbReference type="CDD" id="cd01583">
    <property type="entry name" value="IPMI"/>
    <property type="match status" value="1"/>
</dbReference>
<dbReference type="FunFam" id="3.30.499.10:FF:000006">
    <property type="entry name" value="3-isopropylmalate dehydratase large subunit"/>
    <property type="match status" value="1"/>
</dbReference>
<dbReference type="FunFam" id="3.30.499.10:FF:000007">
    <property type="entry name" value="3-isopropylmalate dehydratase large subunit"/>
    <property type="match status" value="1"/>
</dbReference>
<dbReference type="Gene3D" id="3.30.499.10">
    <property type="entry name" value="Aconitase, domain 3"/>
    <property type="match status" value="2"/>
</dbReference>
<dbReference type="HAMAP" id="MF_01026">
    <property type="entry name" value="LeuC_type1"/>
    <property type="match status" value="1"/>
</dbReference>
<dbReference type="InterPro" id="IPR004430">
    <property type="entry name" value="3-IsopropMal_deHydase_lsu"/>
</dbReference>
<dbReference type="InterPro" id="IPR015931">
    <property type="entry name" value="Acnase/IPM_dHydase_lsu_aba_1/3"/>
</dbReference>
<dbReference type="InterPro" id="IPR001030">
    <property type="entry name" value="Acoase/IPM_deHydtase_lsu_aba"/>
</dbReference>
<dbReference type="InterPro" id="IPR018136">
    <property type="entry name" value="Aconitase_4Fe-4S_BS"/>
</dbReference>
<dbReference type="InterPro" id="IPR036008">
    <property type="entry name" value="Aconitase_4Fe-4S_dom"/>
</dbReference>
<dbReference type="InterPro" id="IPR050067">
    <property type="entry name" value="IPM_dehydratase_rel_enz"/>
</dbReference>
<dbReference type="InterPro" id="IPR033941">
    <property type="entry name" value="IPMI_cat"/>
</dbReference>
<dbReference type="NCBIfam" id="TIGR00170">
    <property type="entry name" value="leuC"/>
    <property type="match status" value="1"/>
</dbReference>
<dbReference type="NCBIfam" id="NF004016">
    <property type="entry name" value="PRK05478.1"/>
    <property type="match status" value="1"/>
</dbReference>
<dbReference type="NCBIfam" id="NF009116">
    <property type="entry name" value="PRK12466.1"/>
    <property type="match status" value="1"/>
</dbReference>
<dbReference type="PANTHER" id="PTHR43822:SF9">
    <property type="entry name" value="3-ISOPROPYLMALATE DEHYDRATASE"/>
    <property type="match status" value="1"/>
</dbReference>
<dbReference type="PANTHER" id="PTHR43822">
    <property type="entry name" value="HOMOACONITASE, MITOCHONDRIAL-RELATED"/>
    <property type="match status" value="1"/>
</dbReference>
<dbReference type="Pfam" id="PF00330">
    <property type="entry name" value="Aconitase"/>
    <property type="match status" value="1"/>
</dbReference>
<dbReference type="PRINTS" id="PR00415">
    <property type="entry name" value="ACONITASE"/>
</dbReference>
<dbReference type="SUPFAM" id="SSF53732">
    <property type="entry name" value="Aconitase iron-sulfur domain"/>
    <property type="match status" value="1"/>
</dbReference>
<dbReference type="PROSITE" id="PS00450">
    <property type="entry name" value="ACONITASE_1"/>
    <property type="match status" value="1"/>
</dbReference>
<dbReference type="PROSITE" id="PS01244">
    <property type="entry name" value="ACONITASE_2"/>
    <property type="match status" value="1"/>
</dbReference>
<reference key="1">
    <citation type="submission" date="2008-04" db="EMBL/GenBank/DDBJ databases">
        <title>Complete sequence of Yersinia pseudotuberculosis PB1/+.</title>
        <authorList>
            <person name="Copeland A."/>
            <person name="Lucas S."/>
            <person name="Lapidus A."/>
            <person name="Glavina del Rio T."/>
            <person name="Dalin E."/>
            <person name="Tice H."/>
            <person name="Bruce D."/>
            <person name="Goodwin L."/>
            <person name="Pitluck S."/>
            <person name="Munk A.C."/>
            <person name="Brettin T."/>
            <person name="Detter J.C."/>
            <person name="Han C."/>
            <person name="Tapia R."/>
            <person name="Schmutz J."/>
            <person name="Larimer F."/>
            <person name="Land M."/>
            <person name="Hauser L."/>
            <person name="Challacombe J.F."/>
            <person name="Green L."/>
            <person name="Lindler L.E."/>
            <person name="Nikolich M.P."/>
            <person name="Richardson P."/>
        </authorList>
    </citation>
    <scope>NUCLEOTIDE SEQUENCE [LARGE SCALE GENOMIC DNA]</scope>
    <source>
        <strain>PB1/+</strain>
    </source>
</reference>
<comment type="function">
    <text evidence="1">Catalyzes the isomerization between 2-isopropylmalate and 3-isopropylmalate, via the formation of 2-isopropylmaleate.</text>
</comment>
<comment type="catalytic activity">
    <reaction evidence="1">
        <text>(2R,3S)-3-isopropylmalate = (2S)-2-isopropylmalate</text>
        <dbReference type="Rhea" id="RHEA:32287"/>
        <dbReference type="ChEBI" id="CHEBI:1178"/>
        <dbReference type="ChEBI" id="CHEBI:35121"/>
        <dbReference type="EC" id="4.2.1.33"/>
    </reaction>
</comment>
<comment type="cofactor">
    <cofactor evidence="1">
        <name>[4Fe-4S] cluster</name>
        <dbReference type="ChEBI" id="CHEBI:49883"/>
    </cofactor>
    <text evidence="1">Binds 1 [4Fe-4S] cluster per subunit.</text>
</comment>
<comment type="pathway">
    <text evidence="1">Amino-acid biosynthesis; L-leucine biosynthesis; L-leucine from 3-methyl-2-oxobutanoate: step 2/4.</text>
</comment>
<comment type="subunit">
    <text evidence="1">Heterodimer of LeuC and LeuD.</text>
</comment>
<comment type="similarity">
    <text evidence="1">Belongs to the aconitase/IPM isomerase family. LeuC type 1 subfamily.</text>
</comment>
<protein>
    <recommendedName>
        <fullName evidence="1">3-isopropylmalate dehydratase large subunit</fullName>
        <ecNumber evidence="1">4.2.1.33</ecNumber>
    </recommendedName>
    <alternativeName>
        <fullName evidence="1">Alpha-IPM isomerase</fullName>
        <shortName evidence="1">IPMI</shortName>
    </alternativeName>
    <alternativeName>
        <fullName evidence="1">Isopropylmalate isomerase</fullName>
    </alternativeName>
</protein>
<keyword id="KW-0004">4Fe-4S</keyword>
<keyword id="KW-0028">Amino-acid biosynthesis</keyword>
<keyword id="KW-0100">Branched-chain amino acid biosynthesis</keyword>
<keyword id="KW-0408">Iron</keyword>
<keyword id="KW-0411">Iron-sulfur</keyword>
<keyword id="KW-0432">Leucine biosynthesis</keyword>
<keyword id="KW-0456">Lyase</keyword>
<keyword id="KW-0479">Metal-binding</keyword>
<proteinExistence type="inferred from homology"/>
<gene>
    <name evidence="1" type="primary">leuC</name>
    <name type="ordered locus">YPTS_0696</name>
</gene>
<accession>B2K4C7</accession>
<sequence length="476" mass="50559">MGTTSSQSKTLYQKLYDAHIVHEAPNETPLLYIDRHLVHEVTSPQAFDGLRAMGRPVRQPGKTFATMDHNVSTQTKDINASGEMARIQMQELIKNCAEFGVSLYDLNHPFQGIVHVIGPEQGMTLPGMTIVCGDSHTATHGAFGSLAFGIGTSEVEHVLATQTLKQGRAKTMRIEVNGTVGAGITAKDIVLAIIGKTGSAGGTGHVVEFCGSAIEALSMEGRMTLCNMAIEMGAKAGLVAPDDTTFAYLKGRQFAPTGEQWEQGVAYWRTLKSDADAQFDTIVTLDAADIAPQVTWGTNPGQVIAVNQIIPAPESFSDPVERASAEKALAYMDLRPGIKLTEVAIDKVFIGSCTNSRIEDLRAAAAIAQGRKVAKGVQAIVVPGSGPVKAQAEAEGLDKIFIAAGFEWRLPGCSMCLAMNNDRLEPGERCASTSNRNFEGRQGRGGRTHLVSPAMAAAAAVSGHFADVRELSAATH</sequence>
<evidence type="ECO:0000255" key="1">
    <source>
        <dbReference type="HAMAP-Rule" id="MF_01026"/>
    </source>
</evidence>